<comment type="function">
    <text evidence="1">Catalyzes the phospholipid dependent N-acylation of the N-terminal cysteine of apolipoprotein, the last step in lipoprotein maturation.</text>
</comment>
<comment type="catalytic activity">
    <reaction evidence="1">
        <text>N-terminal S-1,2-diacyl-sn-glyceryl-L-cysteinyl-[lipoprotein] + a glycerophospholipid = N-acyl-S-1,2-diacyl-sn-glyceryl-L-cysteinyl-[lipoprotein] + a 2-acyl-sn-glycero-3-phospholipid + H(+)</text>
        <dbReference type="Rhea" id="RHEA:48228"/>
        <dbReference type="Rhea" id="RHEA-COMP:14681"/>
        <dbReference type="Rhea" id="RHEA-COMP:14684"/>
        <dbReference type="ChEBI" id="CHEBI:15378"/>
        <dbReference type="ChEBI" id="CHEBI:136912"/>
        <dbReference type="ChEBI" id="CHEBI:140656"/>
        <dbReference type="ChEBI" id="CHEBI:140657"/>
        <dbReference type="ChEBI" id="CHEBI:140660"/>
        <dbReference type="EC" id="2.3.1.269"/>
    </reaction>
</comment>
<comment type="pathway">
    <text evidence="1">Protein modification; lipoprotein biosynthesis (N-acyl transfer).</text>
</comment>
<comment type="subcellular location">
    <subcellularLocation>
        <location evidence="1">Cell inner membrane</location>
        <topology evidence="1">Multi-pass membrane protein</topology>
    </subcellularLocation>
</comment>
<comment type="similarity">
    <text evidence="1">Belongs to the CN hydrolase family. Apolipoprotein N-acyltransferase subfamily.</text>
</comment>
<gene>
    <name evidence="1" type="primary">lnt2</name>
    <name type="ordered locus">LIC_13250</name>
</gene>
<proteinExistence type="inferred from homology"/>
<evidence type="ECO:0000255" key="1">
    <source>
        <dbReference type="HAMAP-Rule" id="MF_01148"/>
    </source>
</evidence>
<reference key="1">
    <citation type="journal article" date="2004" name="J. Bacteriol.">
        <title>Comparative genomics of two Leptospira interrogans serovars reveals novel insights into physiology and pathogenesis.</title>
        <authorList>
            <person name="Nascimento A.L.T.O."/>
            <person name="Ko A.I."/>
            <person name="Martins E.A.L."/>
            <person name="Monteiro-Vitorello C.B."/>
            <person name="Ho P.L."/>
            <person name="Haake D.A."/>
            <person name="Verjovski-Almeida S."/>
            <person name="Hartskeerl R.A."/>
            <person name="Marques M.V."/>
            <person name="Oliveira M.C."/>
            <person name="Menck C.F.M."/>
            <person name="Leite L.C.C."/>
            <person name="Carrer H."/>
            <person name="Coutinho L.L."/>
            <person name="Degrave W.M."/>
            <person name="Dellagostin O.A."/>
            <person name="El-Dorry H."/>
            <person name="Ferro E.S."/>
            <person name="Ferro M.I.T."/>
            <person name="Furlan L.R."/>
            <person name="Gamberini M."/>
            <person name="Giglioti E.A."/>
            <person name="Goes-Neto A."/>
            <person name="Goldman G.H."/>
            <person name="Goldman M.H.S."/>
            <person name="Harakava R."/>
            <person name="Jeronimo S.M.B."/>
            <person name="Junqueira-de-Azevedo I.L.M."/>
            <person name="Kimura E.T."/>
            <person name="Kuramae E.E."/>
            <person name="Lemos E.G.M."/>
            <person name="Lemos M.V.F."/>
            <person name="Marino C.L."/>
            <person name="Nunes L.R."/>
            <person name="de Oliveira R.C."/>
            <person name="Pereira G.G."/>
            <person name="Reis M.S."/>
            <person name="Schriefer A."/>
            <person name="Siqueira W.J."/>
            <person name="Sommer P."/>
            <person name="Tsai S.M."/>
            <person name="Simpson A.J.G."/>
            <person name="Ferro J.A."/>
            <person name="Camargo L.E.A."/>
            <person name="Kitajima J.P."/>
            <person name="Setubal J.C."/>
            <person name="Van Sluys M.A."/>
        </authorList>
    </citation>
    <scope>NUCLEOTIDE SEQUENCE [LARGE SCALE GENOMIC DNA]</scope>
    <source>
        <strain>Fiocruz L1-130</strain>
    </source>
</reference>
<feature type="chain" id="PRO_0000178073" description="Apolipoprotein N-acyltransferase 2">
    <location>
        <begin position="1"/>
        <end position="595"/>
    </location>
</feature>
<feature type="transmembrane region" description="Helical" evidence="1">
    <location>
        <begin position="30"/>
        <end position="50"/>
    </location>
</feature>
<feature type="transmembrane region" description="Helical" evidence="1">
    <location>
        <begin position="63"/>
        <end position="83"/>
    </location>
</feature>
<feature type="transmembrane region" description="Helical" evidence="1">
    <location>
        <begin position="95"/>
        <end position="115"/>
    </location>
</feature>
<feature type="transmembrane region" description="Helical" evidence="1">
    <location>
        <begin position="167"/>
        <end position="187"/>
    </location>
</feature>
<feature type="transmembrane region" description="Helical" evidence="1">
    <location>
        <begin position="210"/>
        <end position="230"/>
    </location>
</feature>
<feature type="transmembrane region" description="Helical" evidence="1">
    <location>
        <begin position="569"/>
        <end position="589"/>
    </location>
</feature>
<feature type="domain" description="CN hydrolase" evidence="1">
    <location>
        <begin position="241"/>
        <end position="555"/>
    </location>
</feature>
<feature type="active site" description="Proton acceptor" evidence="1">
    <location>
        <position position="293"/>
    </location>
</feature>
<feature type="active site" evidence="1">
    <location>
        <position position="372"/>
    </location>
</feature>
<feature type="active site" description="Nucleophile" evidence="1">
    <location>
        <position position="463"/>
    </location>
</feature>
<protein>
    <recommendedName>
        <fullName evidence="1">Apolipoprotein N-acyltransferase 2</fullName>
        <shortName evidence="1">ALP N-acyltransferase 2</shortName>
        <ecNumber evidence="1">2.3.1.269</ecNumber>
    </recommendedName>
</protein>
<keyword id="KW-0012">Acyltransferase</keyword>
<keyword id="KW-0997">Cell inner membrane</keyword>
<keyword id="KW-1003">Cell membrane</keyword>
<keyword id="KW-0472">Membrane</keyword>
<keyword id="KW-0808">Transferase</keyword>
<keyword id="KW-0812">Transmembrane</keyword>
<keyword id="KW-1133">Transmembrane helix</keyword>
<organism>
    <name type="scientific">Leptospira interrogans serogroup Icterohaemorrhagiae serovar copenhageni (strain Fiocruz L1-130)</name>
    <dbReference type="NCBI Taxonomy" id="267671"/>
    <lineage>
        <taxon>Bacteria</taxon>
        <taxon>Pseudomonadati</taxon>
        <taxon>Spirochaetota</taxon>
        <taxon>Spirochaetia</taxon>
        <taxon>Leptospirales</taxon>
        <taxon>Leptospiraceae</taxon>
        <taxon>Leptospira</taxon>
    </lineage>
</organism>
<dbReference type="EC" id="2.3.1.269" evidence="1"/>
<dbReference type="EMBL" id="AE016823">
    <property type="protein sequence ID" value="AAS71794.1"/>
    <property type="molecule type" value="Genomic_DNA"/>
</dbReference>
<dbReference type="KEGG" id="lic:LIC_13250"/>
<dbReference type="HOGENOM" id="CLU_019563_3_1_12"/>
<dbReference type="UniPathway" id="UPA00666"/>
<dbReference type="Proteomes" id="UP000007037">
    <property type="component" value="Chromosome I"/>
</dbReference>
<dbReference type="GO" id="GO:0005886">
    <property type="term" value="C:plasma membrane"/>
    <property type="evidence" value="ECO:0007669"/>
    <property type="project" value="UniProtKB-SubCell"/>
</dbReference>
<dbReference type="GO" id="GO:0016410">
    <property type="term" value="F:N-acyltransferase activity"/>
    <property type="evidence" value="ECO:0007669"/>
    <property type="project" value="UniProtKB-UniRule"/>
</dbReference>
<dbReference type="GO" id="GO:0042158">
    <property type="term" value="P:lipoprotein biosynthetic process"/>
    <property type="evidence" value="ECO:0007669"/>
    <property type="project" value="UniProtKB-UniRule"/>
</dbReference>
<dbReference type="CDD" id="cd07571">
    <property type="entry name" value="ALP_N-acyl_transferase"/>
    <property type="match status" value="1"/>
</dbReference>
<dbReference type="Gene3D" id="3.60.110.10">
    <property type="entry name" value="Carbon-nitrogen hydrolase"/>
    <property type="match status" value="1"/>
</dbReference>
<dbReference type="HAMAP" id="MF_01148">
    <property type="entry name" value="Lnt"/>
    <property type="match status" value="1"/>
</dbReference>
<dbReference type="InterPro" id="IPR004563">
    <property type="entry name" value="Apolipo_AcylTrfase"/>
</dbReference>
<dbReference type="InterPro" id="IPR003010">
    <property type="entry name" value="C-N_Hydrolase"/>
</dbReference>
<dbReference type="InterPro" id="IPR036526">
    <property type="entry name" value="C-N_Hydrolase_sf"/>
</dbReference>
<dbReference type="InterPro" id="IPR045378">
    <property type="entry name" value="LNT_N"/>
</dbReference>
<dbReference type="PANTHER" id="PTHR38686">
    <property type="entry name" value="APOLIPOPROTEIN N-ACYLTRANSFERASE"/>
    <property type="match status" value="1"/>
</dbReference>
<dbReference type="PANTHER" id="PTHR38686:SF1">
    <property type="entry name" value="APOLIPOPROTEIN N-ACYLTRANSFERASE"/>
    <property type="match status" value="1"/>
</dbReference>
<dbReference type="Pfam" id="PF00795">
    <property type="entry name" value="CN_hydrolase"/>
    <property type="match status" value="1"/>
</dbReference>
<dbReference type="Pfam" id="PF20154">
    <property type="entry name" value="LNT_N"/>
    <property type="match status" value="1"/>
</dbReference>
<dbReference type="SUPFAM" id="SSF56317">
    <property type="entry name" value="Carbon-nitrogen hydrolase"/>
    <property type="match status" value="1"/>
</dbReference>
<dbReference type="PROSITE" id="PS50263">
    <property type="entry name" value="CN_HYDROLASE"/>
    <property type="match status" value="1"/>
</dbReference>
<accession>Q72MD8</accession>
<sequence length="595" mass="69214">MDTLHHRFQQFQKTIWFNIFCYLWTGIFSFLAFAPVSLTHFVWIAPFGFFWLSLKYHGKYKKLFFHGLLIGVVFYAISFHWIIHMAITFGNFPYVVAILILLFAGLLFGLKFPIFMMSFSFLSGKIGRHSVWVAGFCGLLSELIGPQLFPWYWGNLAAGNIILAQNAEITGVYGISFLVFIVSYTLFQSNPWHWKEIIHSKEKRKQYLRFITLPALLLLTFIVSGIFLFKKWENVKPVKSLNVLIVQPDAPLSFRDGREIKESIEALMARIEKLTDEGAVRLGKKPDLIVLPEAGVPFFSAHKTEITTKVRRMYWDRFDSLMFLLANRYKANVFFNEIDAGFKGAPSPRNLRYYNNNVLYDPNGDRRDSYQKKFLLMFGEYMPFDFLYELSQQTGRFEPGLTHNLIRYYTPRYYTLAEKEKSPKGRHLGWTDTETFNHEAVRSYYETTRTEVSETGKFLPLICYEVILPEFVREFRTAGNPEFIVNLTNDKWYGATTESDQHMELGRLRSIELRRWMVRSTNSGISANIDHLGRFVGNKKTGLMTAEALSETIDVIDSPPTFYTQYGNLIPWLMLFLTGIYYLNLLIGIRRGKSS</sequence>
<name>LNT2_LEPIC</name>